<reference key="1">
    <citation type="journal article" date="2009" name="PLoS Genet.">
        <title>Organised genome dynamics in the Escherichia coli species results in highly diverse adaptive paths.</title>
        <authorList>
            <person name="Touchon M."/>
            <person name="Hoede C."/>
            <person name="Tenaillon O."/>
            <person name="Barbe V."/>
            <person name="Baeriswyl S."/>
            <person name="Bidet P."/>
            <person name="Bingen E."/>
            <person name="Bonacorsi S."/>
            <person name="Bouchier C."/>
            <person name="Bouvet O."/>
            <person name="Calteau A."/>
            <person name="Chiapello H."/>
            <person name="Clermont O."/>
            <person name="Cruveiller S."/>
            <person name="Danchin A."/>
            <person name="Diard M."/>
            <person name="Dossat C."/>
            <person name="Karoui M.E."/>
            <person name="Frapy E."/>
            <person name="Garry L."/>
            <person name="Ghigo J.M."/>
            <person name="Gilles A.M."/>
            <person name="Johnson J."/>
            <person name="Le Bouguenec C."/>
            <person name="Lescat M."/>
            <person name="Mangenot S."/>
            <person name="Martinez-Jehanne V."/>
            <person name="Matic I."/>
            <person name="Nassif X."/>
            <person name="Oztas S."/>
            <person name="Petit M.A."/>
            <person name="Pichon C."/>
            <person name="Rouy Z."/>
            <person name="Ruf C.S."/>
            <person name="Schneider D."/>
            <person name="Tourret J."/>
            <person name="Vacherie B."/>
            <person name="Vallenet D."/>
            <person name="Medigue C."/>
            <person name="Rocha E.P.C."/>
            <person name="Denamur E."/>
        </authorList>
    </citation>
    <scope>NUCLEOTIDE SEQUENCE [LARGE SCALE GENOMIC DNA]</scope>
    <source>
        <strain>55989 / EAEC</strain>
    </source>
</reference>
<evidence type="ECO:0000255" key="1">
    <source>
        <dbReference type="HAMAP-Rule" id="MF_01825"/>
    </source>
</evidence>
<accession>B7LBH4</accession>
<comment type="function">
    <text evidence="1">Catalyzes the oxidation of erythronate-4-phosphate to 3-hydroxy-2-oxo-4-phosphonooxybutanoate.</text>
</comment>
<comment type="catalytic activity">
    <reaction evidence="1">
        <text>4-phospho-D-erythronate + NAD(+) = (R)-3-hydroxy-2-oxo-4-phosphooxybutanoate + NADH + H(+)</text>
        <dbReference type="Rhea" id="RHEA:18829"/>
        <dbReference type="ChEBI" id="CHEBI:15378"/>
        <dbReference type="ChEBI" id="CHEBI:57540"/>
        <dbReference type="ChEBI" id="CHEBI:57945"/>
        <dbReference type="ChEBI" id="CHEBI:58538"/>
        <dbReference type="ChEBI" id="CHEBI:58766"/>
        <dbReference type="EC" id="1.1.1.290"/>
    </reaction>
</comment>
<comment type="pathway">
    <text evidence="1">Cofactor biosynthesis; pyridoxine 5'-phosphate biosynthesis; pyridoxine 5'-phosphate from D-erythrose 4-phosphate: step 2/5.</text>
</comment>
<comment type="subunit">
    <text evidence="1">Homodimer.</text>
</comment>
<comment type="subcellular location">
    <subcellularLocation>
        <location evidence="1">Cytoplasm</location>
    </subcellularLocation>
</comment>
<comment type="similarity">
    <text evidence="1">Belongs to the D-isomer specific 2-hydroxyacid dehydrogenase family. PdxB subfamily.</text>
</comment>
<gene>
    <name evidence="1" type="primary">pdxB</name>
    <name type="ordered locus">EC55989_2564</name>
</gene>
<keyword id="KW-0963">Cytoplasm</keyword>
<keyword id="KW-0520">NAD</keyword>
<keyword id="KW-0560">Oxidoreductase</keyword>
<keyword id="KW-0664">Pyridoxine biosynthesis</keyword>
<keyword id="KW-1185">Reference proteome</keyword>
<organism>
    <name type="scientific">Escherichia coli (strain 55989 / EAEC)</name>
    <dbReference type="NCBI Taxonomy" id="585055"/>
    <lineage>
        <taxon>Bacteria</taxon>
        <taxon>Pseudomonadati</taxon>
        <taxon>Pseudomonadota</taxon>
        <taxon>Gammaproteobacteria</taxon>
        <taxon>Enterobacterales</taxon>
        <taxon>Enterobacteriaceae</taxon>
        <taxon>Escherichia</taxon>
    </lineage>
</organism>
<sequence>MKILVDENMPYARDLFSRLGEVTAVPGRPIPVAQLADADALMVRSVTKVNESLLAGKPIKFVGTATAGTDHVDEAWLKQAGIGFSAAPGCNAIAVVEYVFSSLLMLAERDGFSLHDRTVGIVGVGNVGRRLQARLEALGIKTLLCDPPRVDRGDEGDFRSLDELVQHADILTFHTPLFKDGPYKTLHLADEKLIRSLKPGAILINACRGAVVDNTALLTCLNEGQKLSVVLDVWEGEPELNVELLTKVDIGTPHIAGYTLEGKARGTTQVFEAYSKFIGHEQHVALDTLLPAPEFGRITLHGPLDQPTLKRLVHLVYDVRRDDAPLRKVAGIPGEFDKLRKNYLERREWSSLYVICDDASAASLLCKLGFNAVHHPAR</sequence>
<proteinExistence type="inferred from homology"/>
<feature type="chain" id="PRO_1000188260" description="Erythronate-4-phosphate dehydrogenase">
    <location>
        <begin position="1"/>
        <end position="378"/>
    </location>
</feature>
<feature type="active site" evidence="1">
    <location>
        <position position="208"/>
    </location>
</feature>
<feature type="active site" evidence="1">
    <location>
        <position position="237"/>
    </location>
</feature>
<feature type="active site" description="Proton donor" evidence="1">
    <location>
        <position position="254"/>
    </location>
</feature>
<feature type="binding site" evidence="1">
    <location>
        <position position="45"/>
    </location>
    <ligand>
        <name>substrate</name>
    </ligand>
</feature>
<feature type="binding site" evidence="1">
    <location>
        <position position="66"/>
    </location>
    <ligand>
        <name>substrate</name>
    </ligand>
</feature>
<feature type="binding site" evidence="1">
    <location>
        <position position="146"/>
    </location>
    <ligand>
        <name>NAD(+)</name>
        <dbReference type="ChEBI" id="CHEBI:57540"/>
    </ligand>
</feature>
<feature type="binding site" evidence="1">
    <location>
        <position position="175"/>
    </location>
    <ligand>
        <name>NAD(+)</name>
        <dbReference type="ChEBI" id="CHEBI:57540"/>
    </ligand>
</feature>
<feature type="binding site" evidence="1">
    <location>
        <position position="232"/>
    </location>
    <ligand>
        <name>NAD(+)</name>
        <dbReference type="ChEBI" id="CHEBI:57540"/>
    </ligand>
</feature>
<feature type="binding site" evidence="1">
    <location>
        <position position="257"/>
    </location>
    <ligand>
        <name>NAD(+)</name>
        <dbReference type="ChEBI" id="CHEBI:57540"/>
    </ligand>
</feature>
<feature type="binding site" evidence="1">
    <location>
        <position position="258"/>
    </location>
    <ligand>
        <name>substrate</name>
    </ligand>
</feature>
<name>PDXB_ECO55</name>
<protein>
    <recommendedName>
        <fullName evidence="1">Erythronate-4-phosphate dehydrogenase</fullName>
        <ecNumber evidence="1">1.1.1.290</ecNumber>
    </recommendedName>
</protein>
<dbReference type="EC" id="1.1.1.290" evidence="1"/>
<dbReference type="EMBL" id="CU928145">
    <property type="protein sequence ID" value="CAU98432.1"/>
    <property type="molecule type" value="Genomic_DNA"/>
</dbReference>
<dbReference type="RefSeq" id="WP_000699126.1">
    <property type="nucleotide sequence ID" value="NC_011748.1"/>
</dbReference>
<dbReference type="SMR" id="B7LBH4"/>
<dbReference type="KEGG" id="eck:EC55989_2564"/>
<dbReference type="HOGENOM" id="CLU_019796_4_0_6"/>
<dbReference type="UniPathway" id="UPA00244">
    <property type="reaction ID" value="UER00310"/>
</dbReference>
<dbReference type="Proteomes" id="UP000000746">
    <property type="component" value="Chromosome"/>
</dbReference>
<dbReference type="GO" id="GO:0005829">
    <property type="term" value="C:cytosol"/>
    <property type="evidence" value="ECO:0007669"/>
    <property type="project" value="TreeGrafter"/>
</dbReference>
<dbReference type="GO" id="GO:0033711">
    <property type="term" value="F:4-phosphoerythronate dehydrogenase activity"/>
    <property type="evidence" value="ECO:0007669"/>
    <property type="project" value="UniProtKB-EC"/>
</dbReference>
<dbReference type="GO" id="GO:0051287">
    <property type="term" value="F:NAD binding"/>
    <property type="evidence" value="ECO:0007669"/>
    <property type="project" value="InterPro"/>
</dbReference>
<dbReference type="GO" id="GO:0046983">
    <property type="term" value="F:protein dimerization activity"/>
    <property type="evidence" value="ECO:0007669"/>
    <property type="project" value="InterPro"/>
</dbReference>
<dbReference type="GO" id="GO:0036001">
    <property type="term" value="P:'de novo' pyridoxal 5'-phosphate biosynthetic process"/>
    <property type="evidence" value="ECO:0007669"/>
    <property type="project" value="TreeGrafter"/>
</dbReference>
<dbReference type="GO" id="GO:0008615">
    <property type="term" value="P:pyridoxine biosynthetic process"/>
    <property type="evidence" value="ECO:0007669"/>
    <property type="project" value="UniProtKB-UniRule"/>
</dbReference>
<dbReference type="CDD" id="cd12158">
    <property type="entry name" value="ErythrP_dh"/>
    <property type="match status" value="1"/>
</dbReference>
<dbReference type="FunFam" id="3.30.1370.170:FF:000001">
    <property type="entry name" value="Erythronate-4-phosphate dehydrogenase"/>
    <property type="match status" value="1"/>
</dbReference>
<dbReference type="FunFam" id="3.40.50.720:FF:000093">
    <property type="entry name" value="Erythronate-4-phosphate dehydrogenase"/>
    <property type="match status" value="1"/>
</dbReference>
<dbReference type="Gene3D" id="3.30.1370.170">
    <property type="match status" value="1"/>
</dbReference>
<dbReference type="Gene3D" id="3.40.50.720">
    <property type="entry name" value="NAD(P)-binding Rossmann-like Domain"/>
    <property type="match status" value="2"/>
</dbReference>
<dbReference type="HAMAP" id="MF_01825">
    <property type="entry name" value="PdxB"/>
    <property type="match status" value="1"/>
</dbReference>
<dbReference type="InterPro" id="IPR006139">
    <property type="entry name" value="D-isomer_2_OHA_DH_cat_dom"/>
</dbReference>
<dbReference type="InterPro" id="IPR029753">
    <property type="entry name" value="D-isomer_DH_CS"/>
</dbReference>
<dbReference type="InterPro" id="IPR029752">
    <property type="entry name" value="D-isomer_DH_CS1"/>
</dbReference>
<dbReference type="InterPro" id="IPR006140">
    <property type="entry name" value="D-isomer_DH_NAD-bd"/>
</dbReference>
<dbReference type="InterPro" id="IPR020921">
    <property type="entry name" value="Erythronate-4-P_DHase"/>
</dbReference>
<dbReference type="InterPro" id="IPR024531">
    <property type="entry name" value="Erythronate-4-P_DHase_dimer"/>
</dbReference>
<dbReference type="InterPro" id="IPR036291">
    <property type="entry name" value="NAD(P)-bd_dom_sf"/>
</dbReference>
<dbReference type="InterPro" id="IPR038251">
    <property type="entry name" value="PdxB_dimer_sf"/>
</dbReference>
<dbReference type="NCBIfam" id="NF001309">
    <property type="entry name" value="PRK00257.1"/>
    <property type="match status" value="1"/>
</dbReference>
<dbReference type="NCBIfam" id="NF011966">
    <property type="entry name" value="PRK15438.1"/>
    <property type="match status" value="1"/>
</dbReference>
<dbReference type="PANTHER" id="PTHR42938">
    <property type="entry name" value="FORMATE DEHYDROGENASE 1"/>
    <property type="match status" value="1"/>
</dbReference>
<dbReference type="PANTHER" id="PTHR42938:SF9">
    <property type="entry name" value="FORMATE DEHYDROGENASE 1"/>
    <property type="match status" value="1"/>
</dbReference>
<dbReference type="Pfam" id="PF00389">
    <property type="entry name" value="2-Hacid_dh"/>
    <property type="match status" value="1"/>
</dbReference>
<dbReference type="Pfam" id="PF02826">
    <property type="entry name" value="2-Hacid_dh_C"/>
    <property type="match status" value="1"/>
</dbReference>
<dbReference type="Pfam" id="PF11890">
    <property type="entry name" value="DUF3410"/>
    <property type="match status" value="1"/>
</dbReference>
<dbReference type="SUPFAM" id="SSF52283">
    <property type="entry name" value="Formate/glycerate dehydrogenase catalytic domain-like"/>
    <property type="match status" value="1"/>
</dbReference>
<dbReference type="SUPFAM" id="SSF51735">
    <property type="entry name" value="NAD(P)-binding Rossmann-fold domains"/>
    <property type="match status" value="1"/>
</dbReference>
<dbReference type="PROSITE" id="PS00065">
    <property type="entry name" value="D_2_HYDROXYACID_DH_1"/>
    <property type="match status" value="1"/>
</dbReference>
<dbReference type="PROSITE" id="PS00671">
    <property type="entry name" value="D_2_HYDROXYACID_DH_3"/>
    <property type="match status" value="1"/>
</dbReference>